<evidence type="ECO:0000250" key="1">
    <source>
        <dbReference type="UniProtKB" id="A0A1L8ER70"/>
    </source>
</evidence>
<evidence type="ECO:0000250" key="2">
    <source>
        <dbReference type="UniProtKB" id="Q95X94"/>
    </source>
</evidence>
<evidence type="ECO:0000250" key="3">
    <source>
        <dbReference type="UniProtKB" id="Q96M11"/>
    </source>
</evidence>
<evidence type="ECO:0000256" key="4">
    <source>
        <dbReference type="SAM" id="MobiDB-lite"/>
    </source>
</evidence>
<evidence type="ECO:0000305" key="5"/>
<comment type="function">
    <text evidence="1 2">Plays a role in ciliogenesis.</text>
</comment>
<comment type="subcellular location">
    <subcellularLocation>
        <location evidence="3">Cytoplasm</location>
    </subcellularLocation>
    <subcellularLocation>
        <location evidence="1 2">Cell projection</location>
        <location evidence="1 2">Cilium</location>
    </subcellularLocation>
    <subcellularLocation>
        <location evidence="1 2">Cytoplasm</location>
        <location evidence="1 2">Cytoskeleton</location>
        <location evidence="1 2">Microtubule organizing center</location>
        <location evidence="1 2">Centrosome</location>
        <location evidence="1 2">Centriole</location>
    </subcellularLocation>
</comment>
<comment type="similarity">
    <text evidence="5">Belongs to the HYLS1 family.</text>
</comment>
<proteinExistence type="evidence at transcript level"/>
<gene>
    <name type="primary">HYLS1</name>
</gene>
<sequence length="314" mass="36196">MAQRRRSFSIGEAVEELVGPDGQKWADMDPEERMLVAAKAFPHICAGHGEGDVRREAQSTLYDPYSKASVTSGKQPAFPAQLHHPHTESNGASEAVSETSQRLRKPVMKRKVLRRKPDGEVLVTDESMISESESGTENDMDVWDLRQRLMNLHFQEDRESPVDVSQKFSLPREYQGISQDQLICYLRREEMGPPAYEQDLIVASRPKSFILPRLDQLSRNRGKVDRVARYFEYKRDWDSMRLPGEDHRKELRWGIREQMLCRAEAQSKPQHIYVPNNYLVPTEKKRSALRWGVRCDLANGVMPKKLTSFPLFPS</sequence>
<dbReference type="EMBL" id="BC112767">
    <property type="protein sequence ID" value="AAI12768.1"/>
    <property type="molecule type" value="mRNA"/>
</dbReference>
<dbReference type="RefSeq" id="NP_001039904.1">
    <property type="nucleotide sequence ID" value="NM_001046439.1"/>
</dbReference>
<dbReference type="FunCoup" id="Q2KI52">
    <property type="interactions" value="1099"/>
</dbReference>
<dbReference type="STRING" id="9913.ENSBTAP00000051795"/>
<dbReference type="PaxDb" id="9913-ENSBTAP00000051795"/>
<dbReference type="GeneID" id="538735"/>
<dbReference type="KEGG" id="bta:538735"/>
<dbReference type="CTD" id="219844"/>
<dbReference type="VEuPathDB" id="HostDB:ENSBTAG00000010859"/>
<dbReference type="eggNOG" id="ENOG502QVD7">
    <property type="taxonomic scope" value="Eukaryota"/>
</dbReference>
<dbReference type="HOGENOM" id="CLU_079788_0_0_1"/>
<dbReference type="InParanoid" id="Q2KI52"/>
<dbReference type="OMA" id="ICYLQRE"/>
<dbReference type="TreeFam" id="TF336132"/>
<dbReference type="Proteomes" id="UP000009136">
    <property type="component" value="Chromosome 29"/>
</dbReference>
<dbReference type="Bgee" id="ENSBTAG00000010859">
    <property type="expression patterns" value="Expressed in oocyte and 106 other cell types or tissues"/>
</dbReference>
<dbReference type="GO" id="GO:0005814">
    <property type="term" value="C:centriole"/>
    <property type="evidence" value="ECO:0000318"/>
    <property type="project" value="GO_Central"/>
</dbReference>
<dbReference type="GO" id="GO:0005929">
    <property type="term" value="C:cilium"/>
    <property type="evidence" value="ECO:0000250"/>
    <property type="project" value="UniProtKB"/>
</dbReference>
<dbReference type="GO" id="GO:0005737">
    <property type="term" value="C:cytoplasm"/>
    <property type="evidence" value="ECO:0007669"/>
    <property type="project" value="UniProtKB-SubCell"/>
</dbReference>
<dbReference type="GO" id="GO:0097730">
    <property type="term" value="C:non-motile cilium"/>
    <property type="evidence" value="ECO:0000318"/>
    <property type="project" value="GO_Central"/>
</dbReference>
<dbReference type="GO" id="GO:0060271">
    <property type="term" value="P:cilium assembly"/>
    <property type="evidence" value="ECO:0000250"/>
    <property type="project" value="UniProtKB"/>
</dbReference>
<dbReference type="InterPro" id="IPR052319">
    <property type="entry name" value="Centriolar_ciliogenesis_assoc"/>
</dbReference>
<dbReference type="InterPro" id="IPR026227">
    <property type="entry name" value="HYLS1"/>
</dbReference>
<dbReference type="InterPro" id="IPR027918">
    <property type="entry name" value="HYLS1_C_dom"/>
</dbReference>
<dbReference type="PANTHER" id="PTHR34174:SF1">
    <property type="entry name" value="CENTRIOLAR AND CILIOGENESIS-ASSOCIATED PROTEIN HYLS1"/>
    <property type="match status" value="1"/>
</dbReference>
<dbReference type="PANTHER" id="PTHR34174">
    <property type="entry name" value="HYDROLETHALUS SYNDROME PROTEIN 1"/>
    <property type="match status" value="1"/>
</dbReference>
<dbReference type="Pfam" id="PF15311">
    <property type="entry name" value="HYLS1_C"/>
    <property type="match status" value="1"/>
</dbReference>
<dbReference type="PRINTS" id="PR02098">
    <property type="entry name" value="HYLETHALUSS1"/>
</dbReference>
<feature type="chain" id="PRO_0000284924" description="Centriolar and ciliogenesis-associated protein HYLS1">
    <location>
        <begin position="1"/>
        <end position="314"/>
    </location>
</feature>
<feature type="region of interest" description="Disordered" evidence="4">
    <location>
        <begin position="64"/>
        <end position="106"/>
    </location>
</feature>
<feature type="compositionally biased region" description="Polar residues" evidence="4">
    <location>
        <begin position="88"/>
        <end position="100"/>
    </location>
</feature>
<name>HYLS1_BOVIN</name>
<accession>Q2KI52</accession>
<reference key="1">
    <citation type="submission" date="2006-01" db="EMBL/GenBank/DDBJ databases">
        <authorList>
            <consortium name="NIH - Mammalian Gene Collection (MGC) project"/>
        </authorList>
    </citation>
    <scope>NUCLEOTIDE SEQUENCE [LARGE SCALE MRNA]</scope>
    <source>
        <strain>Hereford</strain>
        <tissue>Heart ventricle</tissue>
    </source>
</reference>
<organism>
    <name type="scientific">Bos taurus</name>
    <name type="common">Bovine</name>
    <dbReference type="NCBI Taxonomy" id="9913"/>
    <lineage>
        <taxon>Eukaryota</taxon>
        <taxon>Metazoa</taxon>
        <taxon>Chordata</taxon>
        <taxon>Craniata</taxon>
        <taxon>Vertebrata</taxon>
        <taxon>Euteleostomi</taxon>
        <taxon>Mammalia</taxon>
        <taxon>Eutheria</taxon>
        <taxon>Laurasiatheria</taxon>
        <taxon>Artiodactyla</taxon>
        <taxon>Ruminantia</taxon>
        <taxon>Pecora</taxon>
        <taxon>Bovidae</taxon>
        <taxon>Bovinae</taxon>
        <taxon>Bos</taxon>
    </lineage>
</organism>
<protein>
    <recommendedName>
        <fullName evidence="5">Centriolar and ciliogenesis-associated protein HYLS1</fullName>
    </recommendedName>
    <alternativeName>
        <fullName>Hydrolethalus syndrome protein 1 homolog</fullName>
    </alternativeName>
</protein>
<keyword id="KW-0966">Cell projection</keyword>
<keyword id="KW-0970">Cilium biogenesis/degradation</keyword>
<keyword id="KW-0963">Cytoplasm</keyword>
<keyword id="KW-0206">Cytoskeleton</keyword>
<keyword id="KW-1185">Reference proteome</keyword>